<accession>Q2FWP1</accession>
<accession>Q2FWW0</accession>
<reference key="1">
    <citation type="book" date="2006" name="Gram positive pathogens, 2nd edition">
        <title>The Staphylococcus aureus NCTC 8325 genome.</title>
        <editorList>
            <person name="Fischetti V."/>
            <person name="Novick R."/>
            <person name="Ferretti J."/>
            <person name="Portnoy D."/>
            <person name="Rood J."/>
        </editorList>
        <authorList>
            <person name="Gillaspy A.F."/>
            <person name="Worrell V."/>
            <person name="Orvis J."/>
            <person name="Roe B.A."/>
            <person name="Dyer D.W."/>
            <person name="Iandolo J.J."/>
        </authorList>
    </citation>
    <scope>NUCLEOTIDE SEQUENCE [LARGE SCALE GENOMIC DNA]</scope>
    <source>
        <strain>NCTC 8325 / PS 47</strain>
    </source>
</reference>
<reference key="2">
    <citation type="journal article" date="1996" name="Arch. Biochem. Biophys.">
        <title>Comparison of the beta-toxins from Staphylococcus aureus and Staphylococcus intermedius.</title>
        <authorList>
            <person name="Dziewanowska K."/>
            <person name="Edwards V.M."/>
            <person name="Deringer J.R."/>
            <person name="Bohach G.A."/>
            <person name="Guerra D.J."/>
        </authorList>
    </citation>
    <scope>PROTEIN SEQUENCE OF 35-53</scope>
    <scope>CHARACTERIZATION</scope>
</reference>
<reference key="3">
    <citation type="journal article" date="2010" name="J. Bacteriol.">
        <title>Synthetic effects of secG and secY2 mutations on exoproteome biogenesis in Staphylococcus aureus.</title>
        <authorList>
            <person name="Sibbald M.J."/>
            <person name="Winter T."/>
            <person name="van der Kooi-Pol M.M."/>
            <person name="Buist G."/>
            <person name="Tsompanidou E."/>
            <person name="Bosma T."/>
            <person name="Schafer T."/>
            <person name="Ohlsen K."/>
            <person name="Hecker M."/>
            <person name="Antelmann H."/>
            <person name="Engelmann S."/>
            <person name="van Dijl J.M."/>
        </authorList>
    </citation>
    <scope>IDENTIFICATION BY MASS SPECTROMETRY</scope>
    <scope>SUBCELLULAR LOCATION</scope>
    <scope>INDUCTION</scope>
    <source>
        <strain>RN4220</strain>
    </source>
</reference>
<dbReference type="EC" id="3.1.4.3"/>
<dbReference type="EMBL" id="CP000253">
    <property type="protein sequence ID" value="ABD31209.1"/>
    <property type="status" value="ALT_SEQ"/>
    <property type="molecule type" value="Genomic_DNA"/>
</dbReference>
<dbReference type="EMBL" id="CP000253">
    <property type="protein sequence ID" value="ABD31281.1"/>
    <property type="status" value="ALT_SEQ"/>
    <property type="molecule type" value="Genomic_DNA"/>
</dbReference>
<dbReference type="SMR" id="Q2FWP1"/>
<dbReference type="STRING" id="93061.SAOUHSC_02240"/>
<dbReference type="PaxDb" id="1280-SAXN108_2108"/>
<dbReference type="eggNOG" id="COG3568">
    <property type="taxonomic scope" value="Bacteria"/>
</dbReference>
<dbReference type="HOGENOM" id="CLU_196849_0_0_9"/>
<dbReference type="Proteomes" id="UP000008816">
    <property type="component" value="Chromosome"/>
</dbReference>
<dbReference type="GO" id="GO:0005576">
    <property type="term" value="C:extracellular region"/>
    <property type="evidence" value="ECO:0007669"/>
    <property type="project" value="UniProtKB-SubCell"/>
</dbReference>
<dbReference type="GO" id="GO:0034480">
    <property type="term" value="F:phosphatidylcholine phospholipase C activity"/>
    <property type="evidence" value="ECO:0007669"/>
    <property type="project" value="UniProtKB-EC"/>
</dbReference>
<dbReference type="GO" id="GO:0004620">
    <property type="term" value="F:phospholipase activity"/>
    <property type="evidence" value="ECO:0000318"/>
    <property type="project" value="GO_Central"/>
</dbReference>
<dbReference type="GO" id="GO:0004767">
    <property type="term" value="F:sphingomyelin phosphodiesterase activity"/>
    <property type="evidence" value="ECO:0007669"/>
    <property type="project" value="InterPro"/>
</dbReference>
<dbReference type="GO" id="GO:0090729">
    <property type="term" value="F:toxin activity"/>
    <property type="evidence" value="ECO:0007669"/>
    <property type="project" value="UniProtKB-KW"/>
</dbReference>
<dbReference type="GO" id="GO:0031640">
    <property type="term" value="P:killing of cells of another organism"/>
    <property type="evidence" value="ECO:0007669"/>
    <property type="project" value="UniProtKB-KW"/>
</dbReference>
<dbReference type="CDD" id="cd09078">
    <property type="entry name" value="nSMase"/>
    <property type="match status" value="1"/>
</dbReference>
<dbReference type="Gene3D" id="3.60.10.10">
    <property type="entry name" value="Endonuclease/exonuclease/phosphatase"/>
    <property type="match status" value="1"/>
</dbReference>
<dbReference type="InterPro" id="IPR036691">
    <property type="entry name" value="Endo/exonu/phosph_ase_sf"/>
</dbReference>
<dbReference type="InterPro" id="IPR005135">
    <property type="entry name" value="Endo/exonuclease/phosphatase"/>
</dbReference>
<dbReference type="InterPro" id="IPR038772">
    <property type="entry name" value="Sph/SMPD2-like"/>
</dbReference>
<dbReference type="InterPro" id="IPR017766">
    <property type="entry name" value="Sphingomyelinase/PLipase_C"/>
</dbReference>
<dbReference type="NCBIfam" id="TIGR03395">
    <property type="entry name" value="sphingomy"/>
    <property type="match status" value="1"/>
</dbReference>
<dbReference type="PANTHER" id="PTHR16320:SF23">
    <property type="entry name" value="SPHINGOMYELINASE C 1"/>
    <property type="match status" value="1"/>
</dbReference>
<dbReference type="PANTHER" id="PTHR16320">
    <property type="entry name" value="SPHINGOMYELINASE FAMILY MEMBER"/>
    <property type="match status" value="1"/>
</dbReference>
<dbReference type="Pfam" id="PF03372">
    <property type="entry name" value="Exo_endo_phos"/>
    <property type="match status" value="1"/>
</dbReference>
<dbReference type="SUPFAM" id="SSF56219">
    <property type="entry name" value="DNase I-like"/>
    <property type="match status" value="1"/>
</dbReference>
<proteinExistence type="evidence at protein level"/>
<sequence>MVKKTKSNSLKKVATLALANLLLVGALTDNSAKAESKKDDTDLKLVSHNVYMLSTVLYPNWGQYKRADLIGQSSYIKNNDVVIFNEAFDNGASDKLLSNVKKEYPYQTPVLGRSQSGWDKTEGSYSSTVAEDGGVAIVSKYPIKEKIQHVFKSGCGFDNDSNKGFVYTKIEKNGKNVHVIGTHTQSEDSRCGAGHDRKIRAEQMKEISDFVKKKNIPKDETVYIGGDLNVNKGTPEFKDMLKNLNVNDVLYAGHNSTWDPQSNSIAKYNYPNGKPEHLDYIFTDKDHKQPKQLVNEVVTEKPKPWDVYAFPYYYVYNDFSDHYPIKAYSK</sequence>
<comment type="function">
    <text>Bacterial hemolysins are exotoxins that attack blood cell membranes and cause cell rupture. Beta-hemolysin is a phospholipase C with specific activity toward sphingomyelins. Has a high specificity for sphingomyelin, hydrolyzes lysophosphatidylcholine at a much lower rate, but has no activity towards phosphatidylcholine, phosphatidylethanolamine, or phosphatidylserine.</text>
</comment>
<comment type="catalytic activity">
    <reaction>
        <text>a 1,2-diacyl-sn-glycero-3-phosphocholine + H2O = phosphocholine + a 1,2-diacyl-sn-glycerol + H(+)</text>
        <dbReference type="Rhea" id="RHEA:10604"/>
        <dbReference type="ChEBI" id="CHEBI:15377"/>
        <dbReference type="ChEBI" id="CHEBI:15378"/>
        <dbReference type="ChEBI" id="CHEBI:17815"/>
        <dbReference type="ChEBI" id="CHEBI:57643"/>
        <dbReference type="ChEBI" id="CHEBI:295975"/>
        <dbReference type="EC" id="3.1.4.3"/>
    </reaction>
</comment>
<comment type="biophysicochemical properties">
    <phDependence>
        <text>Optimum pH is 6.5-7.5.</text>
    </phDependence>
</comment>
<comment type="subunit">
    <text>Monomer.</text>
</comment>
<comment type="subcellular location">
    <subcellularLocation>
        <location evidence="2">Secreted</location>
    </subcellularLocation>
</comment>
<comment type="induction">
    <text evidence="2">Less protein is secreted in a secG or double secG/secY2 mutant (at protein level).</text>
</comment>
<comment type="similarity">
    <text evidence="3">Belongs to the neutral sphingomyelinase family.</text>
</comment>
<comment type="sequence caution" evidence="3">
    <conflict type="miscellaneous discrepancy">
        <sequence resource="EMBL-CDS" id="ABD31209"/>
    </conflict>
    <text>Integration of phage DNA that disrupted the sequence.</text>
</comment>
<comment type="sequence caution" evidence="3">
    <conflict type="miscellaneous discrepancy">
        <sequence resource="EMBL-CDS" id="ABD31281"/>
    </conflict>
    <text>Integration of phage DNA that disrupted the sequence.</text>
</comment>
<protein>
    <recommendedName>
        <fullName>Phospholipase C</fullName>
        <ecNumber>3.1.4.3</ecNumber>
    </recommendedName>
    <alternativeName>
        <fullName>Beta-hemolysin</fullName>
    </alternativeName>
    <alternativeName>
        <fullName>Beta-toxin</fullName>
    </alternativeName>
    <alternativeName>
        <fullName>Sphingomyelinase</fullName>
        <shortName>SMase</shortName>
    </alternativeName>
</protein>
<name>PHLC_STAA8</name>
<feature type="signal peptide" evidence="1">
    <location>
        <begin position="1"/>
        <end position="34"/>
    </location>
</feature>
<feature type="chain" id="PRO_0000247956" description="Phospholipase C">
    <location>
        <begin position="35"/>
        <end position="330"/>
    </location>
</feature>
<feature type="disulfide bond" evidence="1">
    <location>
        <begin position="155"/>
        <end position="191"/>
    </location>
</feature>
<feature type="sequence conflict" description="In Ref. 2; AA sequence." evidence="3" ref="2">
    <original>Y</original>
    <variation>T</variation>
    <location>
        <position position="51"/>
    </location>
</feature>
<gene>
    <name type="primary">hlb</name>
    <name type="ordered locus">SAOUHSC_02163/SAOUHSC_02240</name>
</gene>
<keyword id="KW-0204">Cytolysis</keyword>
<keyword id="KW-0903">Direct protein sequencing</keyword>
<keyword id="KW-1015">Disulfide bond</keyword>
<keyword id="KW-0354">Hemolysis</keyword>
<keyword id="KW-0378">Hydrolase</keyword>
<keyword id="KW-1185">Reference proteome</keyword>
<keyword id="KW-0964">Secreted</keyword>
<keyword id="KW-0732">Signal</keyword>
<keyword id="KW-0800">Toxin</keyword>
<keyword id="KW-0843">Virulence</keyword>
<evidence type="ECO:0000255" key="1"/>
<evidence type="ECO:0000269" key="2">
    <source>
    </source>
</evidence>
<evidence type="ECO:0000305" key="3"/>
<organism>
    <name type="scientific">Staphylococcus aureus (strain NCTC 8325 / PS 47)</name>
    <dbReference type="NCBI Taxonomy" id="93061"/>
    <lineage>
        <taxon>Bacteria</taxon>
        <taxon>Bacillati</taxon>
        <taxon>Bacillota</taxon>
        <taxon>Bacilli</taxon>
        <taxon>Bacillales</taxon>
        <taxon>Staphylococcaceae</taxon>
        <taxon>Staphylococcus</taxon>
    </lineage>
</organism>